<accession>Q7V937</accession>
<keyword id="KW-0997">Cell inner membrane</keyword>
<keyword id="KW-1003">Cell membrane</keyword>
<keyword id="KW-0407">Ion channel</keyword>
<keyword id="KW-0406">Ion transport</keyword>
<keyword id="KW-0472">Membrane</keyword>
<keyword id="KW-0479">Metal-binding</keyword>
<keyword id="KW-1185">Reference proteome</keyword>
<keyword id="KW-0915">Sodium</keyword>
<keyword id="KW-0812">Transmembrane</keyword>
<keyword id="KW-1133">Transmembrane helix</keyword>
<keyword id="KW-0813">Transport</keyword>
<dbReference type="EMBL" id="BX548175">
    <property type="protein sequence ID" value="CAE20299.1"/>
    <property type="molecule type" value="Genomic_DNA"/>
</dbReference>
<dbReference type="RefSeq" id="WP_011129503.1">
    <property type="nucleotide sequence ID" value="NC_005071.1"/>
</dbReference>
<dbReference type="SMR" id="Q7V937"/>
<dbReference type="KEGG" id="pmt:PMT_0124"/>
<dbReference type="eggNOG" id="COG0239">
    <property type="taxonomic scope" value="Bacteria"/>
</dbReference>
<dbReference type="HOGENOM" id="CLU_114342_2_1_3"/>
<dbReference type="OrthoDB" id="9815830at2"/>
<dbReference type="Proteomes" id="UP000001423">
    <property type="component" value="Chromosome"/>
</dbReference>
<dbReference type="GO" id="GO:0005886">
    <property type="term" value="C:plasma membrane"/>
    <property type="evidence" value="ECO:0007669"/>
    <property type="project" value="UniProtKB-SubCell"/>
</dbReference>
<dbReference type="GO" id="GO:0062054">
    <property type="term" value="F:fluoride channel activity"/>
    <property type="evidence" value="ECO:0007669"/>
    <property type="project" value="UniProtKB-UniRule"/>
</dbReference>
<dbReference type="GO" id="GO:0046872">
    <property type="term" value="F:metal ion binding"/>
    <property type="evidence" value="ECO:0007669"/>
    <property type="project" value="UniProtKB-KW"/>
</dbReference>
<dbReference type="GO" id="GO:0140114">
    <property type="term" value="P:cellular detoxification of fluoride"/>
    <property type="evidence" value="ECO:0007669"/>
    <property type="project" value="UniProtKB-UniRule"/>
</dbReference>
<dbReference type="HAMAP" id="MF_00454">
    <property type="entry name" value="FluC"/>
    <property type="match status" value="1"/>
</dbReference>
<dbReference type="InterPro" id="IPR003691">
    <property type="entry name" value="FluC"/>
</dbReference>
<dbReference type="PANTHER" id="PTHR28259">
    <property type="entry name" value="FLUORIDE EXPORT PROTEIN 1-RELATED"/>
    <property type="match status" value="1"/>
</dbReference>
<dbReference type="PANTHER" id="PTHR28259:SF1">
    <property type="entry name" value="FLUORIDE EXPORT PROTEIN 1-RELATED"/>
    <property type="match status" value="1"/>
</dbReference>
<dbReference type="Pfam" id="PF02537">
    <property type="entry name" value="CRCB"/>
    <property type="match status" value="1"/>
</dbReference>
<gene>
    <name evidence="1" type="primary">fluC2</name>
    <name evidence="1" type="synonym">crcB2</name>
    <name type="ordered locus">PMT_0124</name>
</gene>
<sequence length="124" mass="13137">MANPTQPLPNQWNEMWLVAFGAVPGALVRWQVQNDLLVNVIGAAILGLVVGLPFRPSRQLLLGVGFCGSLTTFSSWMVECSTLISQGAWLSALGLIGLTMGLGLGVAALGFLIGWQFRPSGLGR</sequence>
<feature type="chain" id="PRO_0000110154" description="Fluoride-specific ion channel FluC 2">
    <location>
        <begin position="1"/>
        <end position="124"/>
    </location>
</feature>
<feature type="transmembrane region" description="Helical" evidence="1">
    <location>
        <begin position="8"/>
        <end position="28"/>
    </location>
</feature>
<feature type="transmembrane region" description="Helical" evidence="1">
    <location>
        <begin position="34"/>
        <end position="54"/>
    </location>
</feature>
<feature type="transmembrane region" description="Helical" evidence="1">
    <location>
        <begin position="60"/>
        <end position="80"/>
    </location>
</feature>
<feature type="transmembrane region" description="Helical" evidence="1">
    <location>
        <begin position="93"/>
        <end position="113"/>
    </location>
</feature>
<feature type="binding site" evidence="1">
    <location>
        <position position="68"/>
    </location>
    <ligand>
        <name>Na(+)</name>
        <dbReference type="ChEBI" id="CHEBI:29101"/>
        <note>structural</note>
    </ligand>
</feature>
<feature type="binding site" evidence="1">
    <location>
        <position position="71"/>
    </location>
    <ligand>
        <name>Na(+)</name>
        <dbReference type="ChEBI" id="CHEBI:29101"/>
        <note>structural</note>
    </ligand>
</feature>
<organism>
    <name type="scientific">Prochlorococcus marinus (strain MIT 9313)</name>
    <dbReference type="NCBI Taxonomy" id="74547"/>
    <lineage>
        <taxon>Bacteria</taxon>
        <taxon>Bacillati</taxon>
        <taxon>Cyanobacteriota</taxon>
        <taxon>Cyanophyceae</taxon>
        <taxon>Synechococcales</taxon>
        <taxon>Prochlorococcaceae</taxon>
        <taxon>Prochlorococcus</taxon>
    </lineage>
</organism>
<protein>
    <recommendedName>
        <fullName evidence="1">Fluoride-specific ion channel FluC 2</fullName>
    </recommendedName>
</protein>
<name>FLUC2_PROMM</name>
<evidence type="ECO:0000255" key="1">
    <source>
        <dbReference type="HAMAP-Rule" id="MF_00454"/>
    </source>
</evidence>
<proteinExistence type="inferred from homology"/>
<reference key="1">
    <citation type="journal article" date="2003" name="Nature">
        <title>Genome divergence in two Prochlorococcus ecotypes reflects oceanic niche differentiation.</title>
        <authorList>
            <person name="Rocap G."/>
            <person name="Larimer F.W."/>
            <person name="Lamerdin J.E."/>
            <person name="Malfatti S."/>
            <person name="Chain P."/>
            <person name="Ahlgren N.A."/>
            <person name="Arellano A."/>
            <person name="Coleman M."/>
            <person name="Hauser L."/>
            <person name="Hess W.R."/>
            <person name="Johnson Z.I."/>
            <person name="Land M.L."/>
            <person name="Lindell D."/>
            <person name="Post A.F."/>
            <person name="Regala W."/>
            <person name="Shah M."/>
            <person name="Shaw S.L."/>
            <person name="Steglich C."/>
            <person name="Sullivan M.B."/>
            <person name="Ting C.S."/>
            <person name="Tolonen A."/>
            <person name="Webb E.A."/>
            <person name="Zinser E.R."/>
            <person name="Chisholm S.W."/>
        </authorList>
    </citation>
    <scope>NUCLEOTIDE SEQUENCE [LARGE SCALE GENOMIC DNA]</scope>
    <source>
        <strain>MIT 9313</strain>
    </source>
</reference>
<comment type="function">
    <text evidence="1">Fluoride-specific ion channel. Important for reducing fluoride concentration in the cell, thus reducing its toxicity.</text>
</comment>
<comment type="catalytic activity">
    <reaction evidence="1">
        <text>fluoride(in) = fluoride(out)</text>
        <dbReference type="Rhea" id="RHEA:76159"/>
        <dbReference type="ChEBI" id="CHEBI:17051"/>
    </reaction>
    <physiologicalReaction direction="left-to-right" evidence="1">
        <dbReference type="Rhea" id="RHEA:76160"/>
    </physiologicalReaction>
</comment>
<comment type="activity regulation">
    <text evidence="1">Na(+) is not transported, but it plays an essential structural role and its presence is essential for fluoride channel function.</text>
</comment>
<comment type="subcellular location">
    <subcellularLocation>
        <location evidence="1">Cell inner membrane</location>
        <topology evidence="1">Multi-pass membrane protein</topology>
    </subcellularLocation>
</comment>
<comment type="similarity">
    <text evidence="1">Belongs to the fluoride channel Fluc/FEX (TC 1.A.43) family.</text>
</comment>